<protein>
    <recommendedName>
        <fullName evidence="1">Heme A synthase</fullName>
        <shortName evidence="1">HAS</shortName>
        <ecNumber evidence="1">1.17.99.9</ecNumber>
    </recommendedName>
    <alternativeName>
        <fullName evidence="1">Cytochrome aa3-controlling protein</fullName>
    </alternativeName>
</protein>
<name>CTAA_RHILW</name>
<proteinExistence type="inferred from homology"/>
<sequence>MAVANPTTEQAILSEVRKQNRDRRALRFWLGFVLLALFCLVLVGGATRLTNSGLSITEWRPIHGVIPPLSAAEWEEEFRLYQRIPEFQQLNNSMTVDEFKGIFWWEWAHRLIARGIGVIFALPLLYFWLTGRIEKRLRWPLVGILALGGLQGFIGWWMVSSGLSVRTDVSQYRLATHLVMACLIFAGCMWIMRGLSPHSNDPAPARSSRGFAATIAIFALFQIYLGALVAGLDAGFSYNTWPLMDGALIPSDLLIQQPFWINAFENPKTVQFIHRIGAYTLFALTLINMVIALRAAPWTTHARRAVVLFSLVTLQAAIGIATLLMQVPLHWGLLHQAGALVVFGFAIANWRGFYGEYPHATAIAERG</sequence>
<keyword id="KW-1003">Cell membrane</keyword>
<keyword id="KW-0350">Heme biosynthesis</keyword>
<keyword id="KW-0408">Iron</keyword>
<keyword id="KW-0472">Membrane</keyword>
<keyword id="KW-0479">Metal-binding</keyword>
<keyword id="KW-0560">Oxidoreductase</keyword>
<keyword id="KW-1185">Reference proteome</keyword>
<keyword id="KW-0812">Transmembrane</keyword>
<keyword id="KW-1133">Transmembrane helix</keyword>
<dbReference type="EC" id="1.17.99.9" evidence="1"/>
<dbReference type="EMBL" id="CP001191">
    <property type="protein sequence ID" value="ACI54522.1"/>
    <property type="molecule type" value="Genomic_DNA"/>
</dbReference>
<dbReference type="RefSeq" id="WP_012557306.1">
    <property type="nucleotide sequence ID" value="NC_011369.1"/>
</dbReference>
<dbReference type="SMR" id="B5ZXY9"/>
<dbReference type="STRING" id="395492.Rleg2_1228"/>
<dbReference type="KEGG" id="rlt:Rleg2_1228"/>
<dbReference type="eggNOG" id="COG1612">
    <property type="taxonomic scope" value="Bacteria"/>
</dbReference>
<dbReference type="HOGENOM" id="CLU_017627_0_0_5"/>
<dbReference type="UniPathway" id="UPA00269">
    <property type="reaction ID" value="UER00713"/>
</dbReference>
<dbReference type="Proteomes" id="UP000008330">
    <property type="component" value="Chromosome"/>
</dbReference>
<dbReference type="GO" id="GO:0005886">
    <property type="term" value="C:plasma membrane"/>
    <property type="evidence" value="ECO:0007669"/>
    <property type="project" value="UniProtKB-SubCell"/>
</dbReference>
<dbReference type="GO" id="GO:0046872">
    <property type="term" value="F:metal ion binding"/>
    <property type="evidence" value="ECO:0007669"/>
    <property type="project" value="UniProtKB-KW"/>
</dbReference>
<dbReference type="GO" id="GO:0016653">
    <property type="term" value="F:oxidoreductase activity, acting on NAD(P)H, heme protein as acceptor"/>
    <property type="evidence" value="ECO:0007669"/>
    <property type="project" value="InterPro"/>
</dbReference>
<dbReference type="GO" id="GO:0006784">
    <property type="term" value="P:heme A biosynthetic process"/>
    <property type="evidence" value="ECO:0007669"/>
    <property type="project" value="UniProtKB-UniRule"/>
</dbReference>
<dbReference type="HAMAP" id="MF_01665">
    <property type="entry name" value="HemeA_synth_type2"/>
    <property type="match status" value="1"/>
</dbReference>
<dbReference type="InterPro" id="IPR003780">
    <property type="entry name" value="COX15/CtaA_fam"/>
</dbReference>
<dbReference type="InterPro" id="IPR023754">
    <property type="entry name" value="HemeA_Synthase_type2"/>
</dbReference>
<dbReference type="PANTHER" id="PTHR23289">
    <property type="entry name" value="CYTOCHROME C OXIDASE ASSEMBLY PROTEIN COX15"/>
    <property type="match status" value="1"/>
</dbReference>
<dbReference type="PANTHER" id="PTHR23289:SF2">
    <property type="entry name" value="CYTOCHROME C OXIDASE ASSEMBLY PROTEIN COX15 HOMOLOG"/>
    <property type="match status" value="1"/>
</dbReference>
<dbReference type="Pfam" id="PF02628">
    <property type="entry name" value="COX15-CtaA"/>
    <property type="match status" value="1"/>
</dbReference>
<comment type="function">
    <text evidence="1">Catalyzes the conversion of heme O to heme A by two successive hydroxylations of the methyl group at C8. The first hydroxylation forms heme I, the second hydroxylation results in an unstable dihydroxymethyl group, which spontaneously dehydrates, resulting in the formyl group of heme A.</text>
</comment>
<comment type="catalytic activity">
    <reaction evidence="1">
        <text>Fe(II)-heme o + 2 A + H2O = Fe(II)-heme a + 2 AH2</text>
        <dbReference type="Rhea" id="RHEA:63388"/>
        <dbReference type="ChEBI" id="CHEBI:13193"/>
        <dbReference type="ChEBI" id="CHEBI:15377"/>
        <dbReference type="ChEBI" id="CHEBI:17499"/>
        <dbReference type="ChEBI" id="CHEBI:60530"/>
        <dbReference type="ChEBI" id="CHEBI:61715"/>
        <dbReference type="EC" id="1.17.99.9"/>
    </reaction>
    <physiologicalReaction direction="left-to-right" evidence="1">
        <dbReference type="Rhea" id="RHEA:63389"/>
    </physiologicalReaction>
</comment>
<comment type="cofactor">
    <cofactor evidence="1">
        <name>heme b</name>
        <dbReference type="ChEBI" id="CHEBI:60344"/>
    </cofactor>
</comment>
<comment type="pathway">
    <text evidence="1">Porphyrin-containing compound metabolism; heme A biosynthesis; heme A from heme O: step 1/1.</text>
</comment>
<comment type="subunit">
    <text evidence="1">Interacts with CtaB.</text>
</comment>
<comment type="subcellular location">
    <subcellularLocation>
        <location evidence="1">Cell membrane</location>
        <topology evidence="1">Multi-pass membrane protein</topology>
    </subcellularLocation>
</comment>
<comment type="similarity">
    <text evidence="1">Belongs to the COX15/CtaA family. Type 2 subfamily.</text>
</comment>
<feature type="chain" id="PRO_1000187255" description="Heme A synthase">
    <location>
        <begin position="1"/>
        <end position="367"/>
    </location>
</feature>
<feature type="transmembrane region" description="Helical" evidence="1">
    <location>
        <begin position="25"/>
        <end position="45"/>
    </location>
</feature>
<feature type="transmembrane region" description="Helical" evidence="1">
    <location>
        <begin position="111"/>
        <end position="131"/>
    </location>
</feature>
<feature type="transmembrane region" description="Helical" evidence="1">
    <location>
        <begin position="139"/>
        <end position="159"/>
    </location>
</feature>
<feature type="transmembrane region" description="Helical" evidence="1">
    <location>
        <begin position="174"/>
        <end position="194"/>
    </location>
</feature>
<feature type="transmembrane region" description="Helical" evidence="1">
    <location>
        <begin position="210"/>
        <end position="230"/>
    </location>
</feature>
<feature type="transmembrane region" description="Helical" evidence="1">
    <location>
        <begin position="276"/>
        <end position="296"/>
    </location>
</feature>
<feature type="transmembrane region" description="Helical" evidence="1">
    <location>
        <begin position="305"/>
        <end position="325"/>
    </location>
</feature>
<feature type="transmembrane region" description="Helical" evidence="1">
    <location>
        <begin position="327"/>
        <end position="347"/>
    </location>
</feature>
<feature type="binding site" description="axial binding residue" evidence="1">
    <location>
        <position position="274"/>
    </location>
    <ligand>
        <name>heme</name>
        <dbReference type="ChEBI" id="CHEBI:30413"/>
    </ligand>
    <ligandPart>
        <name>Fe</name>
        <dbReference type="ChEBI" id="CHEBI:18248"/>
    </ligandPart>
</feature>
<feature type="binding site" description="axial binding residue" evidence="1">
    <location>
        <position position="335"/>
    </location>
    <ligand>
        <name>heme</name>
        <dbReference type="ChEBI" id="CHEBI:30413"/>
    </ligand>
    <ligandPart>
        <name>Fe</name>
        <dbReference type="ChEBI" id="CHEBI:18248"/>
    </ligandPart>
</feature>
<gene>
    <name evidence="1" type="primary">ctaA</name>
    <name type="ordered locus">Rleg2_1228</name>
</gene>
<reference key="1">
    <citation type="journal article" date="2010" name="Stand. Genomic Sci.">
        <title>Complete genome sequence of Rhizobium leguminosarum bv trifolii strain WSM2304, an effective microsymbiont of the South American clover Trifolium polymorphum.</title>
        <authorList>
            <person name="Reeve W."/>
            <person name="O'Hara G."/>
            <person name="Chain P."/>
            <person name="Ardley J."/>
            <person name="Brau L."/>
            <person name="Nandesena K."/>
            <person name="Tiwari R."/>
            <person name="Malfatti S."/>
            <person name="Kiss H."/>
            <person name="Lapidus A."/>
            <person name="Copeland A."/>
            <person name="Nolan M."/>
            <person name="Land M."/>
            <person name="Ivanova N."/>
            <person name="Mavromatis K."/>
            <person name="Markowitz V."/>
            <person name="Kyrpides N."/>
            <person name="Melino V."/>
            <person name="Denton M."/>
            <person name="Yates R."/>
            <person name="Howieson J."/>
        </authorList>
    </citation>
    <scope>NUCLEOTIDE SEQUENCE [LARGE SCALE GENOMIC DNA]</scope>
    <source>
        <strain>WSM2304</strain>
    </source>
</reference>
<evidence type="ECO:0000255" key="1">
    <source>
        <dbReference type="HAMAP-Rule" id="MF_01665"/>
    </source>
</evidence>
<accession>B5ZXY9</accession>
<organism>
    <name type="scientific">Rhizobium leguminosarum bv. trifolii (strain WSM2304)</name>
    <dbReference type="NCBI Taxonomy" id="395492"/>
    <lineage>
        <taxon>Bacteria</taxon>
        <taxon>Pseudomonadati</taxon>
        <taxon>Pseudomonadota</taxon>
        <taxon>Alphaproteobacteria</taxon>
        <taxon>Hyphomicrobiales</taxon>
        <taxon>Rhizobiaceae</taxon>
        <taxon>Rhizobium/Agrobacterium group</taxon>
        <taxon>Rhizobium</taxon>
    </lineage>
</organism>